<organism>
    <name type="scientific">Escherichia coli O139:H28 (strain E24377A / ETEC)</name>
    <dbReference type="NCBI Taxonomy" id="331111"/>
    <lineage>
        <taxon>Bacteria</taxon>
        <taxon>Pseudomonadati</taxon>
        <taxon>Pseudomonadota</taxon>
        <taxon>Gammaproteobacteria</taxon>
        <taxon>Enterobacterales</taxon>
        <taxon>Enterobacteriaceae</taxon>
        <taxon>Escherichia</taxon>
    </lineage>
</organism>
<comment type="function">
    <text evidence="1">Forms an efflux pump with AaeA. Could function as a metabolic relief valve, allowing to eliminate certain compounds when they accumulate to high levels in the cell.</text>
</comment>
<comment type="subcellular location">
    <subcellularLocation>
        <location evidence="1">Cell inner membrane</location>
        <topology evidence="1">Multi-pass membrane protein</topology>
    </subcellularLocation>
</comment>
<comment type="induction">
    <text evidence="1">Positively coregulated with aaeA and aaeX by AaeR.</text>
</comment>
<comment type="similarity">
    <text evidence="1">Belongs to the aromatic acid exporter ArAE (TC 2.A.85) family.</text>
</comment>
<dbReference type="EMBL" id="CP000800">
    <property type="protein sequence ID" value="ABV18725.1"/>
    <property type="molecule type" value="Genomic_DNA"/>
</dbReference>
<dbReference type="RefSeq" id="WP_000510962.1">
    <property type="nucleotide sequence ID" value="NC_009801.1"/>
</dbReference>
<dbReference type="SMR" id="A7ZSD4"/>
<dbReference type="GeneID" id="75206090"/>
<dbReference type="KEGG" id="ecw:EcE24377A_3723"/>
<dbReference type="HOGENOM" id="CLU_027647_0_0_6"/>
<dbReference type="Proteomes" id="UP000001122">
    <property type="component" value="Chromosome"/>
</dbReference>
<dbReference type="GO" id="GO:0005886">
    <property type="term" value="C:plasma membrane"/>
    <property type="evidence" value="ECO:0007669"/>
    <property type="project" value="UniProtKB-SubCell"/>
</dbReference>
<dbReference type="GO" id="GO:0022857">
    <property type="term" value="F:transmembrane transporter activity"/>
    <property type="evidence" value="ECO:0007669"/>
    <property type="project" value="UniProtKB-UniRule"/>
</dbReference>
<dbReference type="GO" id="GO:0046942">
    <property type="term" value="P:carboxylic acid transport"/>
    <property type="evidence" value="ECO:0007669"/>
    <property type="project" value="InterPro"/>
</dbReference>
<dbReference type="HAMAP" id="MF_01545">
    <property type="entry name" value="AaeB"/>
    <property type="match status" value="1"/>
</dbReference>
<dbReference type="InterPro" id="IPR006726">
    <property type="entry name" value="PHBA_efflux_AaeB/fusaric-R"/>
</dbReference>
<dbReference type="InterPro" id="IPR023706">
    <property type="entry name" value="PHBA_efflux_pump_AaeB"/>
</dbReference>
<dbReference type="NCBIfam" id="NF007916">
    <property type="entry name" value="PRK10631.1"/>
    <property type="match status" value="1"/>
</dbReference>
<dbReference type="PANTHER" id="PTHR30509:SF9">
    <property type="entry name" value="MULTIDRUG RESISTANCE PROTEIN MDTO"/>
    <property type="match status" value="1"/>
</dbReference>
<dbReference type="PANTHER" id="PTHR30509">
    <property type="entry name" value="P-HYDROXYBENZOIC ACID EFFLUX PUMP SUBUNIT-RELATED"/>
    <property type="match status" value="1"/>
</dbReference>
<dbReference type="Pfam" id="PF04632">
    <property type="entry name" value="FUSC"/>
    <property type="match status" value="1"/>
</dbReference>
<name>AAEB_ECO24</name>
<reference key="1">
    <citation type="journal article" date="2008" name="J. Bacteriol.">
        <title>The pangenome structure of Escherichia coli: comparative genomic analysis of E. coli commensal and pathogenic isolates.</title>
        <authorList>
            <person name="Rasko D.A."/>
            <person name="Rosovitz M.J."/>
            <person name="Myers G.S.A."/>
            <person name="Mongodin E.F."/>
            <person name="Fricke W.F."/>
            <person name="Gajer P."/>
            <person name="Crabtree J."/>
            <person name="Sebaihia M."/>
            <person name="Thomson N.R."/>
            <person name="Chaudhuri R."/>
            <person name="Henderson I.R."/>
            <person name="Sperandio V."/>
            <person name="Ravel J."/>
        </authorList>
    </citation>
    <scope>NUCLEOTIDE SEQUENCE [LARGE SCALE GENOMIC DNA]</scope>
    <source>
        <strain>E24377A / ETEC</strain>
    </source>
</reference>
<keyword id="KW-0997">Cell inner membrane</keyword>
<keyword id="KW-1003">Cell membrane</keyword>
<keyword id="KW-0472">Membrane</keyword>
<keyword id="KW-1185">Reference proteome</keyword>
<keyword id="KW-0812">Transmembrane</keyword>
<keyword id="KW-1133">Transmembrane helix</keyword>
<keyword id="KW-0813">Transport</keyword>
<sequence>MGIFSIANQHIRFAVKLATAIVLALFVGFHFQLETPRWAVLTAAIVAAGPAFAAGGEPYSGAIRYRGFLRIIGTFIGCIAGLVIIIAMIRAPLLMILVCCIWAGFCTWISSLVRIENSYAWGLAGYTALIIVITIQPEPLLTPQFAVERCSEIVIGIVCAIMADLLFSPRSIKQEVDRELESLLVAQYQLMQLCIKHGDGEVVDKAWGDLVRRTTALQGMRSNLNMESSRWARANRRLKAINTLSLTLITQSCETYLIQNTRPELITDTFREFFDTPVETAQDVHKQLKRLRRVIAWTGERETPVTIYSWVAAATRYQLLKRGVISNTKINATEEEILQGEPEVKVESAERHHAMVNFWRTTLSCILGTLFWLWTGWTSGSGAMVMIAVVTSLAMRLPNPRMVAIDFIYGTLAALPLGLLYFLVIIPNTQQSMLLLCISLAVLGFFLGIEVQKRRLGSMGALASTINIIVLDNPMTFHFSQFLDSALGQIVGCVLAFTVILLVRDKSRDRTGRVLLNQFVSAAVSAMTTNVARRKENHLPALYQQLFLLMNKFPGDLPKFRLALTMIIAHQRLRDAPIPVNEDLSAFHRQMRRTADHVISARSDDKRRRYFGQLLEELEIYQEKLRIWQAPPQVTEPVHRLAGMLHKYQHALTDS</sequence>
<protein>
    <recommendedName>
        <fullName evidence="1">p-hydroxybenzoic acid efflux pump subunit AaeB</fullName>
        <shortName evidence="1">pHBA efflux pump protein B</shortName>
    </recommendedName>
</protein>
<gene>
    <name evidence="1" type="primary">aaeB</name>
    <name type="ordered locus">EcE24377A_3723</name>
</gene>
<feature type="chain" id="PRO_1000068806" description="p-hydroxybenzoic acid efflux pump subunit AaeB">
    <location>
        <begin position="1"/>
        <end position="655"/>
    </location>
</feature>
<feature type="transmembrane region" description="Helical" evidence="1">
    <location>
        <begin position="13"/>
        <end position="33"/>
    </location>
</feature>
<feature type="transmembrane region" description="Helical" evidence="1">
    <location>
        <begin position="38"/>
        <end position="58"/>
    </location>
</feature>
<feature type="transmembrane region" description="Helical" evidence="1">
    <location>
        <begin position="69"/>
        <end position="89"/>
    </location>
</feature>
<feature type="transmembrane region" description="Helical" evidence="1">
    <location>
        <begin position="93"/>
        <end position="113"/>
    </location>
</feature>
<feature type="transmembrane region" description="Helical" evidence="1">
    <location>
        <begin position="121"/>
        <end position="141"/>
    </location>
</feature>
<feature type="transmembrane region" description="Helical" evidence="1">
    <location>
        <begin position="152"/>
        <end position="172"/>
    </location>
</feature>
<feature type="transmembrane region" description="Helical" evidence="1">
    <location>
        <begin position="370"/>
        <end position="390"/>
    </location>
</feature>
<feature type="transmembrane region" description="Helical" evidence="1">
    <location>
        <begin position="407"/>
        <end position="427"/>
    </location>
</feature>
<feature type="transmembrane region" description="Helical" evidence="1">
    <location>
        <begin position="431"/>
        <end position="451"/>
    </location>
</feature>
<feature type="transmembrane region" description="Helical" evidence="1">
    <location>
        <begin position="459"/>
        <end position="479"/>
    </location>
</feature>
<feature type="transmembrane region" description="Helical" evidence="1">
    <location>
        <begin position="482"/>
        <end position="502"/>
    </location>
</feature>
<accession>A7ZSD4</accession>
<proteinExistence type="inferred from homology"/>
<evidence type="ECO:0000255" key="1">
    <source>
        <dbReference type="HAMAP-Rule" id="MF_01545"/>
    </source>
</evidence>